<keyword id="KW-0028">Amino-acid biosynthesis</keyword>
<keyword id="KW-0963">Cytoplasm</keyword>
<keyword id="KW-0368">Histidine biosynthesis</keyword>
<evidence type="ECO:0000255" key="1">
    <source>
        <dbReference type="HAMAP-Rule" id="MF_00125"/>
    </source>
</evidence>
<dbReference type="EMBL" id="CP001182">
    <property type="protein sequence ID" value="ACJ40336.1"/>
    <property type="molecule type" value="Genomic_DNA"/>
</dbReference>
<dbReference type="RefSeq" id="WP_000155680.1">
    <property type="nucleotide sequence ID" value="NC_011586.2"/>
</dbReference>
<dbReference type="SMR" id="B7IAF3"/>
<dbReference type="KEGG" id="abn:AB57_1314"/>
<dbReference type="HOGENOM" id="CLU_025113_0_1_6"/>
<dbReference type="UniPathway" id="UPA00031">
    <property type="reaction ID" value="UER00006"/>
</dbReference>
<dbReference type="Proteomes" id="UP000007094">
    <property type="component" value="Chromosome"/>
</dbReference>
<dbReference type="GO" id="GO:0005737">
    <property type="term" value="C:cytoplasm"/>
    <property type="evidence" value="ECO:0007669"/>
    <property type="project" value="UniProtKB-SubCell"/>
</dbReference>
<dbReference type="GO" id="GO:0000105">
    <property type="term" value="P:L-histidine biosynthetic process"/>
    <property type="evidence" value="ECO:0007669"/>
    <property type="project" value="UniProtKB-UniRule"/>
</dbReference>
<dbReference type="Gene3D" id="3.30.930.10">
    <property type="entry name" value="Bira Bifunctional Protein, Domain 2"/>
    <property type="match status" value="1"/>
</dbReference>
<dbReference type="HAMAP" id="MF_00125">
    <property type="entry name" value="HisZ"/>
    <property type="match status" value="1"/>
</dbReference>
<dbReference type="InterPro" id="IPR045864">
    <property type="entry name" value="aa-tRNA-synth_II/BPL/LPL"/>
</dbReference>
<dbReference type="InterPro" id="IPR041715">
    <property type="entry name" value="HisRS-like_core"/>
</dbReference>
<dbReference type="InterPro" id="IPR004516">
    <property type="entry name" value="HisRS/HisZ"/>
</dbReference>
<dbReference type="InterPro" id="IPR004517">
    <property type="entry name" value="HisZ"/>
</dbReference>
<dbReference type="NCBIfam" id="NF008935">
    <property type="entry name" value="PRK12292.1-1"/>
    <property type="match status" value="1"/>
</dbReference>
<dbReference type="NCBIfam" id="NF009086">
    <property type="entry name" value="PRK12421.1"/>
    <property type="match status" value="1"/>
</dbReference>
<dbReference type="PANTHER" id="PTHR11476:SF7">
    <property type="entry name" value="HISTIDINE--TRNA LIGASE"/>
    <property type="match status" value="1"/>
</dbReference>
<dbReference type="PANTHER" id="PTHR11476">
    <property type="entry name" value="HISTIDYL-TRNA SYNTHETASE"/>
    <property type="match status" value="1"/>
</dbReference>
<dbReference type="Pfam" id="PF13393">
    <property type="entry name" value="tRNA-synt_His"/>
    <property type="match status" value="1"/>
</dbReference>
<dbReference type="PIRSF" id="PIRSF001549">
    <property type="entry name" value="His-tRNA_synth"/>
    <property type="match status" value="1"/>
</dbReference>
<dbReference type="SUPFAM" id="SSF55681">
    <property type="entry name" value="Class II aaRS and biotin synthetases"/>
    <property type="match status" value="1"/>
</dbReference>
<protein>
    <recommendedName>
        <fullName evidence="1">ATP phosphoribosyltransferase regulatory subunit</fullName>
    </recommendedName>
</protein>
<feature type="chain" id="PRO_1000117668" description="ATP phosphoribosyltransferase regulatory subunit">
    <location>
        <begin position="1"/>
        <end position="388"/>
    </location>
</feature>
<comment type="function">
    <text evidence="1">Required for the first step of histidine biosynthesis. May allow the feedback regulation of ATP phosphoribosyltransferase activity by histidine.</text>
</comment>
<comment type="pathway">
    <text evidence="1">Amino-acid biosynthesis; L-histidine biosynthesis; L-histidine from 5-phospho-alpha-D-ribose 1-diphosphate: step 1/9.</text>
</comment>
<comment type="subunit">
    <text evidence="1">Heteromultimer composed of HisG and HisZ subunits.</text>
</comment>
<comment type="subcellular location">
    <subcellularLocation>
        <location evidence="1">Cytoplasm</location>
    </subcellularLocation>
</comment>
<comment type="miscellaneous">
    <text>This function is generally fulfilled by the C-terminal part of HisG, which is missing in some bacteria such as this one.</text>
</comment>
<comment type="similarity">
    <text evidence="1">Belongs to the class-II aminoacyl-tRNA synthetase family. HisZ subfamily.</text>
</comment>
<name>HISZ_ACIB5</name>
<reference key="1">
    <citation type="journal article" date="2008" name="J. Bacteriol.">
        <title>Comparative genome sequence analysis of multidrug-resistant Acinetobacter baumannii.</title>
        <authorList>
            <person name="Adams M.D."/>
            <person name="Goglin K."/>
            <person name="Molyneaux N."/>
            <person name="Hujer K.M."/>
            <person name="Lavender H."/>
            <person name="Jamison J.J."/>
            <person name="MacDonald I.J."/>
            <person name="Martin K.M."/>
            <person name="Russo T."/>
            <person name="Campagnari A.A."/>
            <person name="Hujer A.M."/>
            <person name="Bonomo R.A."/>
            <person name="Gill S.R."/>
        </authorList>
    </citation>
    <scope>NUCLEOTIDE SEQUENCE [LARGE SCALE GENOMIC DNA]</scope>
    <source>
        <strain>AB0057</strain>
    </source>
</reference>
<organism>
    <name type="scientific">Acinetobacter baumannii (strain AB0057)</name>
    <dbReference type="NCBI Taxonomy" id="480119"/>
    <lineage>
        <taxon>Bacteria</taxon>
        <taxon>Pseudomonadati</taxon>
        <taxon>Pseudomonadota</taxon>
        <taxon>Gammaproteobacteria</taxon>
        <taxon>Moraxellales</taxon>
        <taxon>Moraxellaceae</taxon>
        <taxon>Acinetobacter</taxon>
        <taxon>Acinetobacter calcoaceticus/baumannii complex</taxon>
    </lineage>
</organism>
<gene>
    <name evidence="1" type="primary">hisZ</name>
    <name type="ordered locus">AB57_1314</name>
</gene>
<accession>B7IAF3</accession>
<proteinExistence type="inferred from homology"/>
<sequence length="388" mass="42861">MTISETWLLPDGVADVLPEQAQVIEKLRREAIDFLAVRGYQLVYTPFIEYIESLSSLSESNQDLDLVTFKVIDQLSGRLLGIRADMTPQVARIDAHVRPVEGVARYCYAGTVLHTKPQNFNATRAPLQLGAELYGHDSIEADVEMVDVMLGLIENAYTLQGAHLDLGHVGLFRSLVKYAGLSKNEEHELSDLYQRKALPELAEFTQNLNMGSDFYALGRYASDLDALQAHLSADILKDAEFDAALNALKTTLEQIKNRWPALNVGIDVVELRSYHYHTGLMYAVYAPNRAAPLAQGGRYDGIGEHFGRARPATGFSCDLYALGANQFAEIETVVAPKGTEADLLKAIANARSEGLRVVQLLGNDDLSSIPYATHQLVLQNGQWNIEKI</sequence>